<reference key="1">
    <citation type="journal article" date="2001" name="Proc. Natl. Acad. Sci. U.S.A.">
        <title>Analysis of the chromosome sequence of the legume symbiont Sinorhizobium meliloti strain 1021.</title>
        <authorList>
            <person name="Capela D."/>
            <person name="Barloy-Hubler F."/>
            <person name="Gouzy J."/>
            <person name="Bothe G."/>
            <person name="Ampe F."/>
            <person name="Batut J."/>
            <person name="Boistard P."/>
            <person name="Becker A."/>
            <person name="Boutry M."/>
            <person name="Cadieu E."/>
            <person name="Dreano S."/>
            <person name="Gloux S."/>
            <person name="Godrie T."/>
            <person name="Goffeau A."/>
            <person name="Kahn D."/>
            <person name="Kiss E."/>
            <person name="Lelaure V."/>
            <person name="Masuy D."/>
            <person name="Pohl T."/>
            <person name="Portetelle D."/>
            <person name="Puehler A."/>
            <person name="Purnelle B."/>
            <person name="Ramsperger U."/>
            <person name="Renard C."/>
            <person name="Thebault P."/>
            <person name="Vandenbol M."/>
            <person name="Weidner S."/>
            <person name="Galibert F."/>
        </authorList>
    </citation>
    <scope>NUCLEOTIDE SEQUENCE [LARGE SCALE GENOMIC DNA]</scope>
    <source>
        <strain>1021</strain>
    </source>
</reference>
<reference key="2">
    <citation type="journal article" date="2001" name="Science">
        <title>The composite genome of the legume symbiont Sinorhizobium meliloti.</title>
        <authorList>
            <person name="Galibert F."/>
            <person name="Finan T.M."/>
            <person name="Long S.R."/>
            <person name="Puehler A."/>
            <person name="Abola P."/>
            <person name="Ampe F."/>
            <person name="Barloy-Hubler F."/>
            <person name="Barnett M.J."/>
            <person name="Becker A."/>
            <person name="Boistard P."/>
            <person name="Bothe G."/>
            <person name="Boutry M."/>
            <person name="Bowser L."/>
            <person name="Buhrmester J."/>
            <person name="Cadieu E."/>
            <person name="Capela D."/>
            <person name="Chain P."/>
            <person name="Cowie A."/>
            <person name="Davis R.W."/>
            <person name="Dreano S."/>
            <person name="Federspiel N.A."/>
            <person name="Fisher R.F."/>
            <person name="Gloux S."/>
            <person name="Godrie T."/>
            <person name="Goffeau A."/>
            <person name="Golding B."/>
            <person name="Gouzy J."/>
            <person name="Gurjal M."/>
            <person name="Hernandez-Lucas I."/>
            <person name="Hong A."/>
            <person name="Huizar L."/>
            <person name="Hyman R.W."/>
            <person name="Jones T."/>
            <person name="Kahn D."/>
            <person name="Kahn M.L."/>
            <person name="Kalman S."/>
            <person name="Keating D.H."/>
            <person name="Kiss E."/>
            <person name="Komp C."/>
            <person name="Lelaure V."/>
            <person name="Masuy D."/>
            <person name="Palm C."/>
            <person name="Peck M.C."/>
            <person name="Pohl T.M."/>
            <person name="Portetelle D."/>
            <person name="Purnelle B."/>
            <person name="Ramsperger U."/>
            <person name="Surzycki R."/>
            <person name="Thebault P."/>
            <person name="Vandenbol M."/>
            <person name="Vorhoelter F.J."/>
            <person name="Weidner S."/>
            <person name="Wells D.H."/>
            <person name="Wong K."/>
            <person name="Yeh K.-C."/>
            <person name="Batut J."/>
        </authorList>
    </citation>
    <scope>NUCLEOTIDE SEQUENCE [LARGE SCALE GENOMIC DNA]</scope>
    <source>
        <strain>1021</strain>
    </source>
</reference>
<dbReference type="EC" id="2.4.2.4" evidence="1"/>
<dbReference type="EMBL" id="AL591688">
    <property type="protein sequence ID" value="CAC41517.1"/>
    <property type="molecule type" value="Genomic_DNA"/>
</dbReference>
<dbReference type="RefSeq" id="NP_384236.1">
    <property type="nucleotide sequence ID" value="NC_003047.1"/>
</dbReference>
<dbReference type="RefSeq" id="WP_010968373.1">
    <property type="nucleotide sequence ID" value="NC_003047.1"/>
</dbReference>
<dbReference type="SMR" id="Q92T50"/>
<dbReference type="EnsemblBacteria" id="CAC41517">
    <property type="protein sequence ID" value="CAC41517"/>
    <property type="gene ID" value="SMc04122"/>
</dbReference>
<dbReference type="KEGG" id="sme:SMc04122"/>
<dbReference type="PATRIC" id="fig|266834.11.peg.1489"/>
<dbReference type="eggNOG" id="COG0213">
    <property type="taxonomic scope" value="Bacteria"/>
</dbReference>
<dbReference type="HOGENOM" id="CLU_025040_0_1_5"/>
<dbReference type="OrthoDB" id="9763887at2"/>
<dbReference type="UniPathway" id="UPA00578">
    <property type="reaction ID" value="UER00638"/>
</dbReference>
<dbReference type="Proteomes" id="UP000001976">
    <property type="component" value="Chromosome"/>
</dbReference>
<dbReference type="GO" id="GO:0005829">
    <property type="term" value="C:cytosol"/>
    <property type="evidence" value="ECO:0007669"/>
    <property type="project" value="TreeGrafter"/>
</dbReference>
<dbReference type="GO" id="GO:0004645">
    <property type="term" value="F:1,4-alpha-oligoglucan phosphorylase activity"/>
    <property type="evidence" value="ECO:0007669"/>
    <property type="project" value="InterPro"/>
</dbReference>
<dbReference type="GO" id="GO:0009032">
    <property type="term" value="F:thymidine phosphorylase activity"/>
    <property type="evidence" value="ECO:0007669"/>
    <property type="project" value="UniProtKB-UniRule"/>
</dbReference>
<dbReference type="GO" id="GO:0006206">
    <property type="term" value="P:pyrimidine nucleobase metabolic process"/>
    <property type="evidence" value="ECO:0007669"/>
    <property type="project" value="InterPro"/>
</dbReference>
<dbReference type="GO" id="GO:0046104">
    <property type="term" value="P:thymidine metabolic process"/>
    <property type="evidence" value="ECO:0007669"/>
    <property type="project" value="UniProtKB-UniRule"/>
</dbReference>
<dbReference type="FunFam" id="3.40.1030.10:FF:000001">
    <property type="entry name" value="Thymidine phosphorylase"/>
    <property type="match status" value="1"/>
</dbReference>
<dbReference type="Gene3D" id="3.40.1030.10">
    <property type="entry name" value="Nucleoside phosphorylase/phosphoribosyltransferase catalytic domain"/>
    <property type="match status" value="1"/>
</dbReference>
<dbReference type="Gene3D" id="3.90.1170.30">
    <property type="entry name" value="Pyrimidine nucleoside phosphorylase-like, C-terminal domain"/>
    <property type="match status" value="1"/>
</dbReference>
<dbReference type="Gene3D" id="1.20.970.10">
    <property type="entry name" value="Transferase, Pyrimidine Nucleoside Phosphorylase, Chain C"/>
    <property type="match status" value="1"/>
</dbReference>
<dbReference type="HAMAP" id="MF_01628">
    <property type="entry name" value="Thymid_phosp"/>
    <property type="match status" value="1"/>
</dbReference>
<dbReference type="InterPro" id="IPR000312">
    <property type="entry name" value="Glycosyl_Trfase_fam3"/>
</dbReference>
<dbReference type="InterPro" id="IPR017459">
    <property type="entry name" value="Glycosyl_Trfase_fam3_N_dom"/>
</dbReference>
<dbReference type="InterPro" id="IPR036320">
    <property type="entry name" value="Glycosyl_Trfase_fam3_N_dom_sf"/>
</dbReference>
<dbReference type="InterPro" id="IPR035902">
    <property type="entry name" value="Nuc_phospho_transferase"/>
</dbReference>
<dbReference type="InterPro" id="IPR036566">
    <property type="entry name" value="PYNP-like_C_sf"/>
</dbReference>
<dbReference type="InterPro" id="IPR013102">
    <property type="entry name" value="PYNP_C"/>
</dbReference>
<dbReference type="InterPro" id="IPR018090">
    <property type="entry name" value="Pyrmidine_PPas_bac/euk"/>
</dbReference>
<dbReference type="InterPro" id="IPR017872">
    <property type="entry name" value="Pyrmidine_PPase_CS"/>
</dbReference>
<dbReference type="InterPro" id="IPR000053">
    <property type="entry name" value="Thymidine/pyrmidine_PPase"/>
</dbReference>
<dbReference type="InterPro" id="IPR013465">
    <property type="entry name" value="Thymidine_Pase"/>
</dbReference>
<dbReference type="NCBIfam" id="NF004490">
    <property type="entry name" value="PRK05820.1"/>
    <property type="match status" value="1"/>
</dbReference>
<dbReference type="NCBIfam" id="TIGR02643">
    <property type="entry name" value="T_phosphoryl"/>
    <property type="match status" value="1"/>
</dbReference>
<dbReference type="NCBIfam" id="TIGR02644">
    <property type="entry name" value="Y_phosphoryl"/>
    <property type="match status" value="1"/>
</dbReference>
<dbReference type="PANTHER" id="PTHR10515">
    <property type="entry name" value="THYMIDINE PHOSPHORYLASE"/>
    <property type="match status" value="1"/>
</dbReference>
<dbReference type="PANTHER" id="PTHR10515:SF0">
    <property type="entry name" value="THYMIDINE PHOSPHORYLASE"/>
    <property type="match status" value="1"/>
</dbReference>
<dbReference type="Pfam" id="PF02885">
    <property type="entry name" value="Glycos_trans_3N"/>
    <property type="match status" value="1"/>
</dbReference>
<dbReference type="Pfam" id="PF00591">
    <property type="entry name" value="Glycos_transf_3"/>
    <property type="match status" value="1"/>
</dbReference>
<dbReference type="Pfam" id="PF07831">
    <property type="entry name" value="PYNP_C"/>
    <property type="match status" value="1"/>
</dbReference>
<dbReference type="PIRSF" id="PIRSF000478">
    <property type="entry name" value="TP_PyNP"/>
    <property type="match status" value="1"/>
</dbReference>
<dbReference type="SMART" id="SM00941">
    <property type="entry name" value="PYNP_C"/>
    <property type="match status" value="1"/>
</dbReference>
<dbReference type="SUPFAM" id="SSF52418">
    <property type="entry name" value="Nucleoside phosphorylase/phosphoribosyltransferase catalytic domain"/>
    <property type="match status" value="1"/>
</dbReference>
<dbReference type="SUPFAM" id="SSF47648">
    <property type="entry name" value="Nucleoside phosphorylase/phosphoribosyltransferase N-terminal domain"/>
    <property type="match status" value="1"/>
</dbReference>
<dbReference type="SUPFAM" id="SSF54680">
    <property type="entry name" value="Pyrimidine nucleoside phosphorylase C-terminal domain"/>
    <property type="match status" value="1"/>
</dbReference>
<dbReference type="PROSITE" id="PS00647">
    <property type="entry name" value="THYMID_PHOSPHORYLASE"/>
    <property type="match status" value="1"/>
</dbReference>
<proteinExistence type="inferred from homology"/>
<comment type="function">
    <text evidence="1">The enzymes which catalyze the reversible phosphorolysis of pyrimidine nucleosides are involved in the degradation of these compounds and in their utilization as carbon and energy sources, or in the rescue of pyrimidine bases for nucleotide synthesis.</text>
</comment>
<comment type="catalytic activity">
    <reaction evidence="1">
        <text>thymidine + phosphate = 2-deoxy-alpha-D-ribose 1-phosphate + thymine</text>
        <dbReference type="Rhea" id="RHEA:16037"/>
        <dbReference type="ChEBI" id="CHEBI:17748"/>
        <dbReference type="ChEBI" id="CHEBI:17821"/>
        <dbReference type="ChEBI" id="CHEBI:43474"/>
        <dbReference type="ChEBI" id="CHEBI:57259"/>
        <dbReference type="EC" id="2.4.2.4"/>
    </reaction>
</comment>
<comment type="pathway">
    <text evidence="1">Pyrimidine metabolism; dTMP biosynthesis via salvage pathway; dTMP from thymine: step 1/2.</text>
</comment>
<comment type="subunit">
    <text evidence="1">Homodimer.</text>
</comment>
<comment type="similarity">
    <text evidence="1">Belongs to the thymidine/pyrimidine-nucleoside phosphorylase family.</text>
</comment>
<name>TYPH_RHIME</name>
<organism>
    <name type="scientific">Rhizobium meliloti (strain 1021)</name>
    <name type="common">Ensifer meliloti</name>
    <name type="synonym">Sinorhizobium meliloti</name>
    <dbReference type="NCBI Taxonomy" id="266834"/>
    <lineage>
        <taxon>Bacteria</taxon>
        <taxon>Pseudomonadati</taxon>
        <taxon>Pseudomonadota</taxon>
        <taxon>Alphaproteobacteria</taxon>
        <taxon>Hyphomicrobiales</taxon>
        <taxon>Rhizobiaceae</taxon>
        <taxon>Sinorhizobium/Ensifer group</taxon>
        <taxon>Sinorhizobium</taxon>
    </lineage>
</organism>
<protein>
    <recommendedName>
        <fullName evidence="1">Thymidine phosphorylase</fullName>
        <ecNumber evidence="1">2.4.2.4</ecNumber>
    </recommendedName>
    <alternativeName>
        <fullName evidence="1">TdRPase</fullName>
    </alternativeName>
</protein>
<feature type="chain" id="PRO_0000059060" description="Thymidine phosphorylase">
    <location>
        <begin position="1"/>
        <end position="440"/>
    </location>
</feature>
<accession>Q92T50</accession>
<gene>
    <name evidence="1" type="primary">deoA</name>
    <name type="ordered locus">R00130</name>
    <name type="ORF">SMc04122</name>
</gene>
<sequence>MAMLPQEIIRKKRDGDRLDPAEIAGFIAGVTDGSVSEGQAAAFAMAVWFSGMNRDECVALTLAMRDSGETLDWSDLARPIVDKHSTGGVGDNVSLMLAPIVAACGAAVPMISGRGLGHTGGTLDKLESIPGYDIQPSPELFRRVADEVGCAIIGQTADLAPADKRLYAIRDVTATVDSVPLITASILSKKLAAGLRSLVLDVKLGNGSFMTDPAETEVLARSLVEVANGAGVRTSALITDMNEPLADAAGNALEIENCLAYLRGEKAGTRLDQVVMALAAEMLVAAGIAAHEAEAEAMARRVLGSGEAMERFGLMVHRLGGPADFVDRPGAYLAKAPAILAVPAGRHGYLTSCKTRELGMAVIELGGGRIRPDDRIDHRVGLTGLRPLGTKVEKGEPIAFVHAADQSQAEAIAKRVVTLYAIADEEPARRPVIVSKLRAG</sequence>
<evidence type="ECO:0000255" key="1">
    <source>
        <dbReference type="HAMAP-Rule" id="MF_01628"/>
    </source>
</evidence>
<keyword id="KW-0328">Glycosyltransferase</keyword>
<keyword id="KW-1185">Reference proteome</keyword>
<keyword id="KW-0808">Transferase</keyword>